<feature type="signal peptide" evidence="2">
    <location>
        <begin position="1"/>
        <end position="23"/>
    </location>
</feature>
<feature type="chain" id="PRO_0000431609" description="Alkaline phosphatase L">
    <location>
        <begin position="24"/>
        <end position="392"/>
    </location>
</feature>
<feature type="sequence variant" description="In strain: MDR25." evidence="5">
    <original>A</original>
    <variation>V</variation>
    <location>
        <position position="53"/>
    </location>
</feature>
<feature type="sequence variant" description="In strain: MDR25." evidence="5">
    <original>A</original>
    <variation>V</variation>
    <location>
        <position position="164"/>
    </location>
</feature>
<feature type="sequence variant" description="In strain: MDR25." evidence="5">
    <original>N</original>
    <variation>S</variation>
    <location>
        <position position="201"/>
    </location>
</feature>
<accession>K4LAH1</accession>
<accession>B0YMX4</accession>
<sequence length="392" mass="40663">MYKRSLIAASLSVAALVSAQAMAEINGGGATLPQQLYQEPGVLTAGFAAYIGAGSGNGKAAFLNNDYTKFVAGTTNKNVHWAGSDSKLSKTNETNPYLSAHGSAWGPLIQVPSVATSVALPFNKSGSNAVNFADVNTLCGVFSGRLTDWSQIPGSGRSGAITVAYRSESSGTTELFTRFLNASCSSALEGGTFAITTSFGNSFSGGLPAGAVSAQGSQAVMNTLNAAEGRITYMSPDFAAPTLAGLDDATKVAQVRGVSPAPANVSAAIGAVTPPTTAQRSDPNNWVPVFAATASATDPSVRPYPTTGYPILGFTNLIFSQCYADATQTQQVRDFFTRHYGASVNNDTAITNHRFVPLPASWKLAVRQSFLTSTNNLYIGHSNVCNGIGRPL</sequence>
<protein>
    <recommendedName>
        <fullName>Alkaline phosphatase L</fullName>
        <shortName>L-AP</shortName>
        <ecNumber evidence="1">3.1.3.1</ecNumber>
    </recommendedName>
    <alternativeName>
        <fullName>Low molecular weight phosphatase</fullName>
    </alternativeName>
    <alternativeName>
        <fullName evidence="4">Protein DING</fullName>
    </alternativeName>
</protein>
<keyword id="KW-0903">Direct protein sequencing</keyword>
<keyword id="KW-0378">Hydrolase</keyword>
<keyword id="KW-0574">Periplasm</keyword>
<keyword id="KW-0964">Secreted</keyword>
<keyword id="KW-0732">Signal</keyword>
<organism>
    <name type="scientific">Pseudomonas aeruginosa</name>
    <dbReference type="NCBI Taxonomy" id="287"/>
    <lineage>
        <taxon>Bacteria</taxon>
        <taxon>Pseudomonadati</taxon>
        <taxon>Pseudomonadota</taxon>
        <taxon>Gammaproteobacteria</taxon>
        <taxon>Pseudomonadales</taxon>
        <taxon>Pseudomonadaceae</taxon>
        <taxon>Pseudomonas</taxon>
    </lineage>
</organism>
<comment type="function">
    <text evidence="1">Has both a phosphomonoesterase and phosphodiesterase activity.</text>
</comment>
<comment type="catalytic activity">
    <reaction evidence="1">
        <text>a phosphate monoester + H2O = an alcohol + phosphate</text>
        <dbReference type="Rhea" id="RHEA:15017"/>
        <dbReference type="ChEBI" id="CHEBI:15377"/>
        <dbReference type="ChEBI" id="CHEBI:30879"/>
        <dbReference type="ChEBI" id="CHEBI:43474"/>
        <dbReference type="ChEBI" id="CHEBI:67140"/>
        <dbReference type="EC" id="3.1.3.1"/>
    </reaction>
</comment>
<comment type="subunit">
    <text evidence="1">Homodimer.</text>
</comment>
<comment type="subcellular location">
    <subcellularLocation>
        <location evidence="3">Secreted</location>
    </subcellularLocation>
    <subcellularLocation>
        <location evidence="1">Periplasm</location>
    </subcellularLocation>
    <text evidence="3">In strain MDR25 forms long appendages distinct from flagella or pili on the cell surface.</text>
</comment>
<comment type="induction">
    <text evidence="2 3">Strongly induced by phosphate limitation (150-fold for MDR25 smooth colonies, 1400-fold for MDR25 rough colonies and 5000-fold for MDR1) (PubMed:18282104). Highly expressed compared to the same gene in PA14, suppressed by inorganic phosphate, but less sensitive to phosphate than strain PA14.</text>
</comment>
<comment type="miscellaneous">
    <text evidence="2 3">Protein and DNA sequence from strain MDR1 in (PubMed:18282104). DNA sequence from MDR25 in (PubMed:24372739).</text>
</comment>
<comment type="similarity">
    <text evidence="5">Belongs to the PstS family.</text>
</comment>
<gene>
    <name evidence="5" type="primary">phoA2</name>
    <name evidence="4" type="synonym">dinG</name>
</gene>
<reference key="1">
    <citation type="journal article" date="2008" name="PLoS Pathog.">
        <title>Structure-function aspects of PstS in multi-drug-resistant Pseudomonas aeruginosa.</title>
        <authorList>
            <person name="Zaborina O."/>
            <person name="Holbrook C."/>
            <person name="Chen Y."/>
            <person name="Long J."/>
            <person name="Zaborin A."/>
            <person name="Morozova I."/>
            <person name="Fernandez H."/>
            <person name="Wang Y."/>
            <person name="Turner J.R."/>
            <person name="Alverdy J.C."/>
        </authorList>
    </citation>
    <scope>NUCLEOTIDE SEQUENCE [GENOMIC DNA]</scope>
    <scope>PROTEIN SEQUENCE OF 24-42</scope>
    <scope>INDUCTION</scope>
    <source>
        <strain>MDR1</strain>
        <strain>MDR25</strain>
    </source>
</reference>
<reference key="2">
    <citation type="journal article" date="2014" name="FEMS Microbiol. Lett.">
        <title>Localization of DING proteins on PstS-containing outer-surface appendages of Pseudomonas aeruginosa.</title>
        <authorList>
            <person name="Shah M."/>
            <person name="Zaborin A."/>
            <person name="Alverdy J.C."/>
            <person name="Scott K."/>
            <person name="Zaborina O."/>
        </authorList>
    </citation>
    <scope>NUCLEOTIDE SEQUENCE [GENOMIC DNA]</scope>
    <scope>SUBCELLULAR LOCATION</scope>
    <scope>INDUCTION</scope>
    <source>
        <strain>MDR25</strain>
    </source>
</reference>
<evidence type="ECO:0000250" key="1">
    <source>
        <dbReference type="UniProtKB" id="P35482"/>
    </source>
</evidence>
<evidence type="ECO:0000269" key="2">
    <source>
    </source>
</evidence>
<evidence type="ECO:0000269" key="3">
    <source>
    </source>
</evidence>
<evidence type="ECO:0000303" key="4">
    <source>
    </source>
</evidence>
<evidence type="ECO:0000305" key="5"/>
<proteinExistence type="evidence at protein level"/>
<name>PPBL_PSEAI</name>
<dbReference type="EC" id="3.1.3.1" evidence="1"/>
<dbReference type="EMBL" id="EF616488">
    <property type="protein sequence ID" value="ABU39826.1"/>
    <property type="molecule type" value="Genomic_DNA"/>
</dbReference>
<dbReference type="EMBL" id="JX500097">
    <property type="protein sequence ID" value="AFV08643.1"/>
    <property type="molecule type" value="Genomic_DNA"/>
</dbReference>
<dbReference type="RefSeq" id="WP_034027919.1">
    <property type="nucleotide sequence ID" value="NZ_RWXM01000076.1"/>
</dbReference>
<dbReference type="SMR" id="K4LAH1"/>
<dbReference type="GO" id="GO:0005576">
    <property type="term" value="C:extracellular region"/>
    <property type="evidence" value="ECO:0007669"/>
    <property type="project" value="UniProtKB-SubCell"/>
</dbReference>
<dbReference type="GO" id="GO:0042597">
    <property type="term" value="C:periplasmic space"/>
    <property type="evidence" value="ECO:0007669"/>
    <property type="project" value="UniProtKB-SubCell"/>
</dbReference>
<dbReference type="GO" id="GO:0004035">
    <property type="term" value="F:alkaline phosphatase activity"/>
    <property type="evidence" value="ECO:0007669"/>
    <property type="project" value="UniProtKB-EC"/>
</dbReference>
<dbReference type="Gene3D" id="3.40.190.10">
    <property type="entry name" value="Periplasmic binding protein-like II"/>
    <property type="match status" value="2"/>
</dbReference>
<dbReference type="InterPro" id="IPR024370">
    <property type="entry name" value="PBP_domain"/>
</dbReference>
<dbReference type="InterPro" id="IPR050962">
    <property type="entry name" value="Phosphate-bind_PstS"/>
</dbReference>
<dbReference type="PANTHER" id="PTHR42996">
    <property type="entry name" value="PHOSPHATE-BINDING PROTEIN PSTS"/>
    <property type="match status" value="1"/>
</dbReference>
<dbReference type="PANTHER" id="PTHR42996:SF1">
    <property type="entry name" value="PHOSPHATE-BINDING PROTEIN PSTS"/>
    <property type="match status" value="1"/>
</dbReference>
<dbReference type="Pfam" id="PF12849">
    <property type="entry name" value="PBP_like_2"/>
    <property type="match status" value="1"/>
</dbReference>
<dbReference type="SUPFAM" id="SSF53850">
    <property type="entry name" value="Periplasmic binding protein-like II"/>
    <property type="match status" value="1"/>
</dbReference>